<reference key="1">
    <citation type="journal article" date="2003" name="Science">
        <title>Genome of Geobacter sulfurreducens: metal reduction in subsurface environments.</title>
        <authorList>
            <person name="Methe B.A."/>
            <person name="Nelson K.E."/>
            <person name="Eisen J.A."/>
            <person name="Paulsen I.T."/>
            <person name="Nelson W.C."/>
            <person name="Heidelberg J.F."/>
            <person name="Wu D."/>
            <person name="Wu M."/>
            <person name="Ward N.L."/>
            <person name="Beanan M.J."/>
            <person name="Dodson R.J."/>
            <person name="Madupu R."/>
            <person name="Brinkac L.M."/>
            <person name="Daugherty S.C."/>
            <person name="DeBoy R.T."/>
            <person name="Durkin A.S."/>
            <person name="Gwinn M.L."/>
            <person name="Kolonay J.F."/>
            <person name="Sullivan S.A."/>
            <person name="Haft D.H."/>
            <person name="Selengut J."/>
            <person name="Davidsen T.M."/>
            <person name="Zafar N."/>
            <person name="White O."/>
            <person name="Tran B."/>
            <person name="Romero C."/>
            <person name="Forberger H.A."/>
            <person name="Weidman J.F."/>
            <person name="Khouri H.M."/>
            <person name="Feldblyum T.V."/>
            <person name="Utterback T.R."/>
            <person name="Van Aken S.E."/>
            <person name="Lovley D.R."/>
            <person name="Fraser C.M."/>
        </authorList>
    </citation>
    <scope>NUCLEOTIDE SEQUENCE [LARGE SCALE GENOMIC DNA]</scope>
    <source>
        <strain>ATCC 51573 / DSM 12127 / PCA</strain>
    </source>
</reference>
<comment type="function">
    <text evidence="1">One of the primary rRNA binding proteins, it binds specifically to the 5'-end of 16S ribosomal RNA.</text>
</comment>
<comment type="subunit">
    <text evidence="1">Part of the 30S ribosomal subunit.</text>
</comment>
<comment type="similarity">
    <text evidence="1">Belongs to the universal ribosomal protein uS17 family.</text>
</comment>
<evidence type="ECO:0000255" key="1">
    <source>
        <dbReference type="HAMAP-Rule" id="MF_01345"/>
    </source>
</evidence>
<evidence type="ECO:0000305" key="2"/>
<feature type="chain" id="PRO_0000233482" description="Small ribosomal subunit protein uS17">
    <location>
        <begin position="1"/>
        <end position="85"/>
    </location>
</feature>
<gene>
    <name evidence="1" type="primary">rpsQ</name>
    <name type="ordered locus">GSU2848</name>
</gene>
<keyword id="KW-1185">Reference proteome</keyword>
<keyword id="KW-0687">Ribonucleoprotein</keyword>
<keyword id="KW-0689">Ribosomal protein</keyword>
<keyword id="KW-0694">RNA-binding</keyword>
<keyword id="KW-0699">rRNA-binding</keyword>
<protein>
    <recommendedName>
        <fullName evidence="1">Small ribosomal subunit protein uS17</fullName>
    </recommendedName>
    <alternativeName>
        <fullName evidence="2">30S ribosomal protein S17</fullName>
    </alternativeName>
</protein>
<organism>
    <name type="scientific">Geobacter sulfurreducens (strain ATCC 51573 / DSM 12127 / PCA)</name>
    <dbReference type="NCBI Taxonomy" id="243231"/>
    <lineage>
        <taxon>Bacteria</taxon>
        <taxon>Pseudomonadati</taxon>
        <taxon>Thermodesulfobacteriota</taxon>
        <taxon>Desulfuromonadia</taxon>
        <taxon>Geobacterales</taxon>
        <taxon>Geobacteraceae</taxon>
        <taxon>Geobacter</taxon>
    </lineage>
</organism>
<sequence>MSQRGNRKTQVGVVVSDKMDKTVVVRVSHLVKHPVYNKYIKRSVKYKAHDTDNSCKTGDRVLIVETRPLSKDKRWKVRQIIDRVE</sequence>
<dbReference type="EMBL" id="AE017180">
    <property type="protein sequence ID" value="AAR36241.1"/>
    <property type="molecule type" value="Genomic_DNA"/>
</dbReference>
<dbReference type="RefSeq" id="NP_953891.1">
    <property type="nucleotide sequence ID" value="NC_002939.5"/>
</dbReference>
<dbReference type="RefSeq" id="WP_010943477.1">
    <property type="nucleotide sequence ID" value="NC_002939.5"/>
</dbReference>
<dbReference type="SMR" id="Q748Z7"/>
<dbReference type="FunCoup" id="Q748Z7">
    <property type="interactions" value="425"/>
</dbReference>
<dbReference type="STRING" id="243231.GSU2848"/>
<dbReference type="EnsemblBacteria" id="AAR36241">
    <property type="protein sequence ID" value="AAR36241"/>
    <property type="gene ID" value="GSU2848"/>
</dbReference>
<dbReference type="KEGG" id="gsu:GSU2848"/>
<dbReference type="PATRIC" id="fig|243231.5.peg.2874"/>
<dbReference type="eggNOG" id="COG0186">
    <property type="taxonomic scope" value="Bacteria"/>
</dbReference>
<dbReference type="HOGENOM" id="CLU_073626_1_2_7"/>
<dbReference type="InParanoid" id="Q748Z7"/>
<dbReference type="OrthoDB" id="9811714at2"/>
<dbReference type="Proteomes" id="UP000000577">
    <property type="component" value="Chromosome"/>
</dbReference>
<dbReference type="GO" id="GO:0022627">
    <property type="term" value="C:cytosolic small ribosomal subunit"/>
    <property type="evidence" value="ECO:0000318"/>
    <property type="project" value="GO_Central"/>
</dbReference>
<dbReference type="GO" id="GO:0019843">
    <property type="term" value="F:rRNA binding"/>
    <property type="evidence" value="ECO:0007669"/>
    <property type="project" value="UniProtKB-UniRule"/>
</dbReference>
<dbReference type="GO" id="GO:0003735">
    <property type="term" value="F:structural constituent of ribosome"/>
    <property type="evidence" value="ECO:0000318"/>
    <property type="project" value="GO_Central"/>
</dbReference>
<dbReference type="GO" id="GO:0006412">
    <property type="term" value="P:translation"/>
    <property type="evidence" value="ECO:0007669"/>
    <property type="project" value="UniProtKB-UniRule"/>
</dbReference>
<dbReference type="CDD" id="cd00364">
    <property type="entry name" value="Ribosomal_uS17"/>
    <property type="match status" value="1"/>
</dbReference>
<dbReference type="FunFam" id="2.40.50.140:FF:000311">
    <property type="entry name" value="30S ribosomal protein S17"/>
    <property type="match status" value="1"/>
</dbReference>
<dbReference type="Gene3D" id="2.40.50.140">
    <property type="entry name" value="Nucleic acid-binding proteins"/>
    <property type="match status" value="1"/>
</dbReference>
<dbReference type="HAMAP" id="MF_01345_B">
    <property type="entry name" value="Ribosomal_uS17_B"/>
    <property type="match status" value="1"/>
</dbReference>
<dbReference type="InterPro" id="IPR012340">
    <property type="entry name" value="NA-bd_OB-fold"/>
</dbReference>
<dbReference type="InterPro" id="IPR000266">
    <property type="entry name" value="Ribosomal_uS17"/>
</dbReference>
<dbReference type="InterPro" id="IPR019984">
    <property type="entry name" value="Ribosomal_uS17_bact/chlr"/>
</dbReference>
<dbReference type="InterPro" id="IPR019979">
    <property type="entry name" value="Ribosomal_uS17_CS"/>
</dbReference>
<dbReference type="NCBIfam" id="NF004123">
    <property type="entry name" value="PRK05610.1"/>
    <property type="match status" value="1"/>
</dbReference>
<dbReference type="NCBIfam" id="TIGR03635">
    <property type="entry name" value="uS17_bact"/>
    <property type="match status" value="1"/>
</dbReference>
<dbReference type="PANTHER" id="PTHR10744">
    <property type="entry name" value="40S RIBOSOMAL PROTEIN S11 FAMILY MEMBER"/>
    <property type="match status" value="1"/>
</dbReference>
<dbReference type="PANTHER" id="PTHR10744:SF1">
    <property type="entry name" value="SMALL RIBOSOMAL SUBUNIT PROTEIN US17M"/>
    <property type="match status" value="1"/>
</dbReference>
<dbReference type="Pfam" id="PF00366">
    <property type="entry name" value="Ribosomal_S17"/>
    <property type="match status" value="1"/>
</dbReference>
<dbReference type="PRINTS" id="PR00973">
    <property type="entry name" value="RIBOSOMALS17"/>
</dbReference>
<dbReference type="SUPFAM" id="SSF50249">
    <property type="entry name" value="Nucleic acid-binding proteins"/>
    <property type="match status" value="1"/>
</dbReference>
<dbReference type="PROSITE" id="PS00056">
    <property type="entry name" value="RIBOSOMAL_S17"/>
    <property type="match status" value="1"/>
</dbReference>
<accession>Q748Z7</accession>
<proteinExistence type="inferred from homology"/>
<name>RS17_GEOSL</name>